<protein>
    <recommendedName>
        <fullName evidence="1">Glycerol-3-phosphate dehydrogenase [NAD(P)+]</fullName>
        <ecNumber evidence="1">1.1.1.94</ecNumber>
    </recommendedName>
    <alternativeName>
        <fullName evidence="1">NAD(P)(+)-dependent glycerol-3-phosphate dehydrogenase</fullName>
    </alternativeName>
    <alternativeName>
        <fullName evidence="1">NAD(P)H-dependent dihydroxyacetone-phosphate reductase</fullName>
    </alternativeName>
</protein>
<organism>
    <name type="scientific">Methylobacillus flagellatus (strain ATCC 51484 / DSM 6875 / VKM B-1610 / KT)</name>
    <dbReference type="NCBI Taxonomy" id="265072"/>
    <lineage>
        <taxon>Bacteria</taxon>
        <taxon>Pseudomonadati</taxon>
        <taxon>Pseudomonadota</taxon>
        <taxon>Betaproteobacteria</taxon>
        <taxon>Nitrosomonadales</taxon>
        <taxon>Methylophilaceae</taxon>
        <taxon>Methylobacillus</taxon>
    </lineage>
</organism>
<proteinExistence type="inferred from homology"/>
<reference key="1">
    <citation type="submission" date="2006-03" db="EMBL/GenBank/DDBJ databases">
        <title>Complete sequence of Methylobacillus flagellatus KT.</title>
        <authorList>
            <consortium name="US DOE Joint Genome Institute"/>
            <person name="Copeland A."/>
            <person name="Lucas S."/>
            <person name="Lapidus A."/>
            <person name="Barry K."/>
            <person name="Detter J.C."/>
            <person name="Glavina del Rio T."/>
            <person name="Hammon N."/>
            <person name="Israni S."/>
            <person name="Dalin E."/>
            <person name="Tice H."/>
            <person name="Pitluck S."/>
            <person name="Brettin T."/>
            <person name="Bruce D."/>
            <person name="Han C."/>
            <person name="Tapia R."/>
            <person name="Saunders E."/>
            <person name="Gilna P."/>
            <person name="Schmutz J."/>
            <person name="Larimer F."/>
            <person name="Land M."/>
            <person name="Kyrpides N."/>
            <person name="Anderson I."/>
            <person name="Richardson P."/>
        </authorList>
    </citation>
    <scope>NUCLEOTIDE SEQUENCE [LARGE SCALE GENOMIC DNA]</scope>
    <source>
        <strain>ATCC 51484 / DSM 6875 / VKM B-1610 / KT</strain>
    </source>
</reference>
<feature type="chain" id="PRO_0000255331" description="Glycerol-3-phosphate dehydrogenase [NAD(P)+]">
    <location>
        <begin position="1"/>
        <end position="329"/>
    </location>
</feature>
<feature type="active site" description="Proton acceptor" evidence="1">
    <location>
        <position position="187"/>
    </location>
</feature>
<feature type="binding site" evidence="1">
    <location>
        <position position="11"/>
    </location>
    <ligand>
        <name>NADPH</name>
        <dbReference type="ChEBI" id="CHEBI:57783"/>
    </ligand>
</feature>
<feature type="binding site" evidence="1">
    <location>
        <position position="30"/>
    </location>
    <ligand>
        <name>NADPH</name>
        <dbReference type="ChEBI" id="CHEBI:57783"/>
    </ligand>
</feature>
<feature type="binding site" evidence="1">
    <location>
        <position position="103"/>
    </location>
    <ligand>
        <name>NADPH</name>
        <dbReference type="ChEBI" id="CHEBI:57783"/>
    </ligand>
</feature>
<feature type="binding site" evidence="1">
    <location>
        <position position="103"/>
    </location>
    <ligand>
        <name>sn-glycerol 3-phosphate</name>
        <dbReference type="ChEBI" id="CHEBI:57597"/>
    </ligand>
</feature>
<feature type="binding site" evidence="1">
    <location>
        <position position="132"/>
    </location>
    <ligand>
        <name>sn-glycerol 3-phosphate</name>
        <dbReference type="ChEBI" id="CHEBI:57597"/>
    </ligand>
</feature>
<feature type="binding site" evidence="1">
    <location>
        <position position="134"/>
    </location>
    <ligand>
        <name>sn-glycerol 3-phosphate</name>
        <dbReference type="ChEBI" id="CHEBI:57597"/>
    </ligand>
</feature>
<feature type="binding site" evidence="1">
    <location>
        <position position="136"/>
    </location>
    <ligand>
        <name>NADPH</name>
        <dbReference type="ChEBI" id="CHEBI:57783"/>
    </ligand>
</feature>
<feature type="binding site" evidence="1">
    <location>
        <position position="187"/>
    </location>
    <ligand>
        <name>sn-glycerol 3-phosphate</name>
        <dbReference type="ChEBI" id="CHEBI:57597"/>
    </ligand>
</feature>
<feature type="binding site" evidence="1">
    <location>
        <position position="240"/>
    </location>
    <ligand>
        <name>sn-glycerol 3-phosphate</name>
        <dbReference type="ChEBI" id="CHEBI:57597"/>
    </ligand>
</feature>
<feature type="binding site" evidence="1">
    <location>
        <position position="250"/>
    </location>
    <ligand>
        <name>sn-glycerol 3-phosphate</name>
        <dbReference type="ChEBI" id="CHEBI:57597"/>
    </ligand>
</feature>
<feature type="binding site" evidence="1">
    <location>
        <position position="251"/>
    </location>
    <ligand>
        <name>NADPH</name>
        <dbReference type="ChEBI" id="CHEBI:57783"/>
    </ligand>
</feature>
<feature type="binding site" evidence="1">
    <location>
        <position position="251"/>
    </location>
    <ligand>
        <name>sn-glycerol 3-phosphate</name>
        <dbReference type="ChEBI" id="CHEBI:57597"/>
    </ligand>
</feature>
<feature type="binding site" evidence="1">
    <location>
        <position position="252"/>
    </location>
    <ligand>
        <name>sn-glycerol 3-phosphate</name>
        <dbReference type="ChEBI" id="CHEBI:57597"/>
    </ligand>
</feature>
<feature type="binding site" evidence="1">
    <location>
        <position position="275"/>
    </location>
    <ligand>
        <name>NADPH</name>
        <dbReference type="ChEBI" id="CHEBI:57783"/>
    </ligand>
</feature>
<feature type="binding site" evidence="1">
    <location>
        <position position="277"/>
    </location>
    <ligand>
        <name>NADPH</name>
        <dbReference type="ChEBI" id="CHEBI:57783"/>
    </ligand>
</feature>
<keyword id="KW-0963">Cytoplasm</keyword>
<keyword id="KW-0444">Lipid biosynthesis</keyword>
<keyword id="KW-0443">Lipid metabolism</keyword>
<keyword id="KW-0520">NAD</keyword>
<keyword id="KW-0521">NADP</keyword>
<keyword id="KW-0547">Nucleotide-binding</keyword>
<keyword id="KW-0560">Oxidoreductase</keyword>
<keyword id="KW-0594">Phospholipid biosynthesis</keyword>
<keyword id="KW-1208">Phospholipid metabolism</keyword>
<keyword id="KW-1185">Reference proteome</keyword>
<accession>Q1GZ87</accession>
<name>GPDA_METFK</name>
<comment type="function">
    <text evidence="1">Catalyzes the reduction of the glycolytic intermediate dihydroxyacetone phosphate (DHAP) to sn-glycerol 3-phosphate (G3P), the key precursor for phospholipid synthesis.</text>
</comment>
<comment type="catalytic activity">
    <reaction evidence="1">
        <text>sn-glycerol 3-phosphate + NAD(+) = dihydroxyacetone phosphate + NADH + H(+)</text>
        <dbReference type="Rhea" id="RHEA:11092"/>
        <dbReference type="ChEBI" id="CHEBI:15378"/>
        <dbReference type="ChEBI" id="CHEBI:57540"/>
        <dbReference type="ChEBI" id="CHEBI:57597"/>
        <dbReference type="ChEBI" id="CHEBI:57642"/>
        <dbReference type="ChEBI" id="CHEBI:57945"/>
        <dbReference type="EC" id="1.1.1.94"/>
    </reaction>
    <physiologicalReaction direction="right-to-left" evidence="1">
        <dbReference type="Rhea" id="RHEA:11094"/>
    </physiologicalReaction>
</comment>
<comment type="catalytic activity">
    <reaction evidence="1">
        <text>sn-glycerol 3-phosphate + NADP(+) = dihydroxyacetone phosphate + NADPH + H(+)</text>
        <dbReference type="Rhea" id="RHEA:11096"/>
        <dbReference type="ChEBI" id="CHEBI:15378"/>
        <dbReference type="ChEBI" id="CHEBI:57597"/>
        <dbReference type="ChEBI" id="CHEBI:57642"/>
        <dbReference type="ChEBI" id="CHEBI:57783"/>
        <dbReference type="ChEBI" id="CHEBI:58349"/>
        <dbReference type="EC" id="1.1.1.94"/>
    </reaction>
    <physiologicalReaction direction="right-to-left" evidence="1">
        <dbReference type="Rhea" id="RHEA:11098"/>
    </physiologicalReaction>
</comment>
<comment type="pathway">
    <text evidence="1">Membrane lipid metabolism; glycerophospholipid metabolism.</text>
</comment>
<comment type="subcellular location">
    <subcellularLocation>
        <location evidence="1">Cytoplasm</location>
    </subcellularLocation>
</comment>
<comment type="similarity">
    <text evidence="1">Belongs to the NAD-dependent glycerol-3-phosphate dehydrogenase family.</text>
</comment>
<dbReference type="EC" id="1.1.1.94" evidence="1"/>
<dbReference type="EMBL" id="CP000284">
    <property type="protein sequence ID" value="ABE50450.1"/>
    <property type="molecule type" value="Genomic_DNA"/>
</dbReference>
<dbReference type="RefSeq" id="WP_011480404.1">
    <property type="nucleotide sequence ID" value="NC_007947.1"/>
</dbReference>
<dbReference type="SMR" id="Q1GZ87"/>
<dbReference type="STRING" id="265072.Mfla_2183"/>
<dbReference type="KEGG" id="mfa:Mfla_2183"/>
<dbReference type="eggNOG" id="COG0240">
    <property type="taxonomic scope" value="Bacteria"/>
</dbReference>
<dbReference type="HOGENOM" id="CLU_033449_0_2_4"/>
<dbReference type="UniPathway" id="UPA00940"/>
<dbReference type="Proteomes" id="UP000002440">
    <property type="component" value="Chromosome"/>
</dbReference>
<dbReference type="GO" id="GO:0005829">
    <property type="term" value="C:cytosol"/>
    <property type="evidence" value="ECO:0007669"/>
    <property type="project" value="TreeGrafter"/>
</dbReference>
<dbReference type="GO" id="GO:0047952">
    <property type="term" value="F:glycerol-3-phosphate dehydrogenase [NAD(P)+] activity"/>
    <property type="evidence" value="ECO:0007669"/>
    <property type="project" value="UniProtKB-UniRule"/>
</dbReference>
<dbReference type="GO" id="GO:0051287">
    <property type="term" value="F:NAD binding"/>
    <property type="evidence" value="ECO:0007669"/>
    <property type="project" value="InterPro"/>
</dbReference>
<dbReference type="GO" id="GO:0005975">
    <property type="term" value="P:carbohydrate metabolic process"/>
    <property type="evidence" value="ECO:0007669"/>
    <property type="project" value="InterPro"/>
</dbReference>
<dbReference type="GO" id="GO:0046167">
    <property type="term" value="P:glycerol-3-phosphate biosynthetic process"/>
    <property type="evidence" value="ECO:0007669"/>
    <property type="project" value="UniProtKB-UniRule"/>
</dbReference>
<dbReference type="GO" id="GO:0046168">
    <property type="term" value="P:glycerol-3-phosphate catabolic process"/>
    <property type="evidence" value="ECO:0007669"/>
    <property type="project" value="InterPro"/>
</dbReference>
<dbReference type="GO" id="GO:0006650">
    <property type="term" value="P:glycerophospholipid metabolic process"/>
    <property type="evidence" value="ECO:0007669"/>
    <property type="project" value="UniProtKB-UniRule"/>
</dbReference>
<dbReference type="GO" id="GO:0008654">
    <property type="term" value="P:phospholipid biosynthetic process"/>
    <property type="evidence" value="ECO:0007669"/>
    <property type="project" value="UniProtKB-KW"/>
</dbReference>
<dbReference type="FunFam" id="1.10.1040.10:FF:000001">
    <property type="entry name" value="Glycerol-3-phosphate dehydrogenase [NAD(P)+]"/>
    <property type="match status" value="1"/>
</dbReference>
<dbReference type="FunFam" id="3.40.50.720:FF:000019">
    <property type="entry name" value="Glycerol-3-phosphate dehydrogenase [NAD(P)+]"/>
    <property type="match status" value="1"/>
</dbReference>
<dbReference type="Gene3D" id="1.10.1040.10">
    <property type="entry name" value="N-(1-d-carboxylethyl)-l-norvaline Dehydrogenase, domain 2"/>
    <property type="match status" value="1"/>
</dbReference>
<dbReference type="Gene3D" id="3.40.50.720">
    <property type="entry name" value="NAD(P)-binding Rossmann-like Domain"/>
    <property type="match status" value="1"/>
</dbReference>
<dbReference type="HAMAP" id="MF_00394">
    <property type="entry name" value="NAD_Glyc3P_dehydrog"/>
    <property type="match status" value="1"/>
</dbReference>
<dbReference type="InterPro" id="IPR008927">
    <property type="entry name" value="6-PGluconate_DH-like_C_sf"/>
</dbReference>
<dbReference type="InterPro" id="IPR013328">
    <property type="entry name" value="6PGD_dom2"/>
</dbReference>
<dbReference type="InterPro" id="IPR006168">
    <property type="entry name" value="G3P_DH_NAD-dep"/>
</dbReference>
<dbReference type="InterPro" id="IPR006109">
    <property type="entry name" value="G3P_DH_NAD-dep_C"/>
</dbReference>
<dbReference type="InterPro" id="IPR011128">
    <property type="entry name" value="G3P_DH_NAD-dep_N"/>
</dbReference>
<dbReference type="InterPro" id="IPR036291">
    <property type="entry name" value="NAD(P)-bd_dom_sf"/>
</dbReference>
<dbReference type="NCBIfam" id="NF000940">
    <property type="entry name" value="PRK00094.1-2"/>
    <property type="match status" value="1"/>
</dbReference>
<dbReference type="NCBIfam" id="NF000942">
    <property type="entry name" value="PRK00094.1-4"/>
    <property type="match status" value="1"/>
</dbReference>
<dbReference type="PANTHER" id="PTHR11728">
    <property type="entry name" value="GLYCEROL-3-PHOSPHATE DEHYDROGENASE"/>
    <property type="match status" value="1"/>
</dbReference>
<dbReference type="PANTHER" id="PTHR11728:SF1">
    <property type="entry name" value="GLYCEROL-3-PHOSPHATE DEHYDROGENASE [NAD(+)] 2, CHLOROPLASTIC"/>
    <property type="match status" value="1"/>
</dbReference>
<dbReference type="Pfam" id="PF07479">
    <property type="entry name" value="NAD_Gly3P_dh_C"/>
    <property type="match status" value="1"/>
</dbReference>
<dbReference type="Pfam" id="PF01210">
    <property type="entry name" value="NAD_Gly3P_dh_N"/>
    <property type="match status" value="1"/>
</dbReference>
<dbReference type="PIRSF" id="PIRSF000114">
    <property type="entry name" value="Glycerol-3-P_dh"/>
    <property type="match status" value="1"/>
</dbReference>
<dbReference type="PRINTS" id="PR00077">
    <property type="entry name" value="GPDHDRGNASE"/>
</dbReference>
<dbReference type="SUPFAM" id="SSF48179">
    <property type="entry name" value="6-phosphogluconate dehydrogenase C-terminal domain-like"/>
    <property type="match status" value="1"/>
</dbReference>
<dbReference type="SUPFAM" id="SSF51735">
    <property type="entry name" value="NAD(P)-binding Rossmann-fold domains"/>
    <property type="match status" value="1"/>
</dbReference>
<gene>
    <name evidence="1" type="primary">gpsA</name>
    <name type="ordered locus">Mfla_2183</name>
</gene>
<evidence type="ECO:0000255" key="1">
    <source>
        <dbReference type="HAMAP-Rule" id="MF_00394"/>
    </source>
</evidence>
<sequence length="329" mass="34753">MKISILGAGAWGTALALQISRRHQVSLWTRNQAHIVDMQVTRANLQYLGDFAFGDQLAVEGDLGRALDGADLIVSVVPTNGFRNALKEIKRLGCDAPVVWASKGLEAATAKLPHEVAQDELGDSRHWGVLSGPSFAAELVRGLPTAVTLAANDAEFAARAGAMLHGGNFRVYTSTDVIGVSVGGALKNVLAIAAGISDGMQCGNNARAALITRGIAEMTRFGVALGGAKETFMGLTGAGDLILTCTGQYSRNREVGLRLANGQTLQEILKTLGHVAEGVHTAREVVKRAGQLGVEMPITQEVDQVLSHGRSPRQAMENLLSREQKSEAL</sequence>